<sequence length="285" mass="31448">MITSNTSFLALIGNPVSHSLSPIMQNAAIKYLGLDLIYIAIPCKNEDLEIVVNSLKKMNCKGLNITIPFKKKVFDLCSEISPVAKKIQAINTLKLKNDNNWSGTNTDIEGFIYPLKNLNLTNKNSIILGSGGAARSVIQGLIDLKLSKITIISRNNNSLNELITLFKNDIKIEGILNTNDEIGNLIEETDLIVNTTPIGMSQTSDNDAIPFGQSSWETIDSNTIVYDLIYNPSPTPFLKFCDRKGCMTIDGTQMLIAQGAKSLSFWTNGLEVPFEVMHDALKKYL</sequence>
<evidence type="ECO:0000255" key="1">
    <source>
        <dbReference type="HAMAP-Rule" id="MF_00222"/>
    </source>
</evidence>
<dbReference type="EC" id="1.1.1.25" evidence="1"/>
<dbReference type="EMBL" id="CP000552">
    <property type="protein sequence ID" value="ABM73103.1"/>
    <property type="molecule type" value="Genomic_DNA"/>
</dbReference>
<dbReference type="RefSeq" id="WP_011821187.1">
    <property type="nucleotide sequence ID" value="NC_008817.1"/>
</dbReference>
<dbReference type="SMR" id="A2BZ92"/>
<dbReference type="STRING" id="167542.P9515_18961"/>
<dbReference type="GeneID" id="60201454"/>
<dbReference type="KEGG" id="pmc:P9515_18961"/>
<dbReference type="eggNOG" id="COG0169">
    <property type="taxonomic scope" value="Bacteria"/>
</dbReference>
<dbReference type="HOGENOM" id="CLU_044063_2_0_3"/>
<dbReference type="OrthoDB" id="9792692at2"/>
<dbReference type="UniPathway" id="UPA00053">
    <property type="reaction ID" value="UER00087"/>
</dbReference>
<dbReference type="Proteomes" id="UP000001589">
    <property type="component" value="Chromosome"/>
</dbReference>
<dbReference type="GO" id="GO:0005829">
    <property type="term" value="C:cytosol"/>
    <property type="evidence" value="ECO:0007669"/>
    <property type="project" value="TreeGrafter"/>
</dbReference>
<dbReference type="GO" id="GO:0050661">
    <property type="term" value="F:NADP binding"/>
    <property type="evidence" value="ECO:0007669"/>
    <property type="project" value="InterPro"/>
</dbReference>
<dbReference type="GO" id="GO:0004764">
    <property type="term" value="F:shikimate 3-dehydrogenase (NADP+) activity"/>
    <property type="evidence" value="ECO:0007669"/>
    <property type="project" value="UniProtKB-UniRule"/>
</dbReference>
<dbReference type="GO" id="GO:0008652">
    <property type="term" value="P:amino acid biosynthetic process"/>
    <property type="evidence" value="ECO:0007669"/>
    <property type="project" value="UniProtKB-KW"/>
</dbReference>
<dbReference type="GO" id="GO:0009073">
    <property type="term" value="P:aromatic amino acid family biosynthetic process"/>
    <property type="evidence" value="ECO:0007669"/>
    <property type="project" value="UniProtKB-KW"/>
</dbReference>
<dbReference type="GO" id="GO:0009423">
    <property type="term" value="P:chorismate biosynthetic process"/>
    <property type="evidence" value="ECO:0007669"/>
    <property type="project" value="UniProtKB-UniRule"/>
</dbReference>
<dbReference type="GO" id="GO:0019632">
    <property type="term" value="P:shikimate metabolic process"/>
    <property type="evidence" value="ECO:0007669"/>
    <property type="project" value="InterPro"/>
</dbReference>
<dbReference type="CDD" id="cd01065">
    <property type="entry name" value="NAD_bind_Shikimate_DH"/>
    <property type="match status" value="1"/>
</dbReference>
<dbReference type="Gene3D" id="3.40.50.10860">
    <property type="entry name" value="Leucine Dehydrogenase, chain A, domain 1"/>
    <property type="match status" value="1"/>
</dbReference>
<dbReference type="Gene3D" id="3.40.50.720">
    <property type="entry name" value="NAD(P)-binding Rossmann-like Domain"/>
    <property type="match status" value="1"/>
</dbReference>
<dbReference type="HAMAP" id="MF_00222">
    <property type="entry name" value="Shikimate_DH_AroE"/>
    <property type="match status" value="1"/>
</dbReference>
<dbReference type="InterPro" id="IPR046346">
    <property type="entry name" value="Aminoacid_DH-like_N_sf"/>
</dbReference>
<dbReference type="InterPro" id="IPR036291">
    <property type="entry name" value="NAD(P)-bd_dom_sf"/>
</dbReference>
<dbReference type="InterPro" id="IPR041121">
    <property type="entry name" value="SDH_C"/>
</dbReference>
<dbReference type="InterPro" id="IPR011342">
    <property type="entry name" value="Shikimate_DH"/>
</dbReference>
<dbReference type="InterPro" id="IPR013708">
    <property type="entry name" value="Shikimate_DH-bd_N"/>
</dbReference>
<dbReference type="InterPro" id="IPR022893">
    <property type="entry name" value="Shikimate_DH_fam"/>
</dbReference>
<dbReference type="NCBIfam" id="TIGR00507">
    <property type="entry name" value="aroE"/>
    <property type="match status" value="1"/>
</dbReference>
<dbReference type="NCBIfam" id="NF001314">
    <property type="entry name" value="PRK00258.2-2"/>
    <property type="match status" value="1"/>
</dbReference>
<dbReference type="PANTHER" id="PTHR21089:SF1">
    <property type="entry name" value="BIFUNCTIONAL 3-DEHYDROQUINATE DEHYDRATASE_SHIKIMATE DEHYDROGENASE, CHLOROPLASTIC"/>
    <property type="match status" value="1"/>
</dbReference>
<dbReference type="PANTHER" id="PTHR21089">
    <property type="entry name" value="SHIKIMATE DEHYDROGENASE"/>
    <property type="match status" value="1"/>
</dbReference>
<dbReference type="Pfam" id="PF18317">
    <property type="entry name" value="SDH_C"/>
    <property type="match status" value="1"/>
</dbReference>
<dbReference type="Pfam" id="PF08501">
    <property type="entry name" value="Shikimate_dh_N"/>
    <property type="match status" value="1"/>
</dbReference>
<dbReference type="SUPFAM" id="SSF53223">
    <property type="entry name" value="Aminoacid dehydrogenase-like, N-terminal domain"/>
    <property type="match status" value="1"/>
</dbReference>
<dbReference type="SUPFAM" id="SSF51735">
    <property type="entry name" value="NAD(P)-binding Rossmann-fold domains"/>
    <property type="match status" value="1"/>
</dbReference>
<feature type="chain" id="PRO_0000325149" description="Shikimate dehydrogenase (NADP(+))">
    <location>
        <begin position="1"/>
        <end position="285"/>
    </location>
</feature>
<feature type="active site" description="Proton acceptor" evidence="1">
    <location>
        <position position="70"/>
    </location>
</feature>
<feature type="binding site" evidence="1">
    <location>
        <begin position="19"/>
        <end position="21"/>
    </location>
    <ligand>
        <name>shikimate</name>
        <dbReference type="ChEBI" id="CHEBI:36208"/>
    </ligand>
</feature>
<feature type="binding site" evidence="1">
    <location>
        <position position="66"/>
    </location>
    <ligand>
        <name>shikimate</name>
        <dbReference type="ChEBI" id="CHEBI:36208"/>
    </ligand>
</feature>
<feature type="binding site" evidence="1">
    <location>
        <position position="91"/>
    </location>
    <ligand>
        <name>shikimate</name>
        <dbReference type="ChEBI" id="CHEBI:36208"/>
    </ligand>
</feature>
<feature type="binding site" evidence="1">
    <location>
        <position position="107"/>
    </location>
    <ligand>
        <name>shikimate</name>
        <dbReference type="ChEBI" id="CHEBI:36208"/>
    </ligand>
</feature>
<feature type="binding site" evidence="1">
    <location>
        <begin position="129"/>
        <end position="133"/>
    </location>
    <ligand>
        <name>NADP(+)</name>
        <dbReference type="ChEBI" id="CHEBI:58349"/>
    </ligand>
</feature>
<feature type="binding site" evidence="1">
    <location>
        <position position="228"/>
    </location>
    <ligand>
        <name>NADP(+)</name>
        <dbReference type="ChEBI" id="CHEBI:58349"/>
    </ligand>
</feature>
<feature type="binding site" evidence="1">
    <location>
        <position position="230"/>
    </location>
    <ligand>
        <name>shikimate</name>
        <dbReference type="ChEBI" id="CHEBI:36208"/>
    </ligand>
</feature>
<feature type="binding site" evidence="1">
    <location>
        <position position="251"/>
    </location>
    <ligand>
        <name>NADP(+)</name>
        <dbReference type="ChEBI" id="CHEBI:58349"/>
    </ligand>
</feature>
<accession>A2BZ92</accession>
<organism>
    <name type="scientific">Prochlorococcus marinus (strain MIT 9515)</name>
    <dbReference type="NCBI Taxonomy" id="167542"/>
    <lineage>
        <taxon>Bacteria</taxon>
        <taxon>Bacillati</taxon>
        <taxon>Cyanobacteriota</taxon>
        <taxon>Cyanophyceae</taxon>
        <taxon>Synechococcales</taxon>
        <taxon>Prochlorococcaceae</taxon>
        <taxon>Prochlorococcus</taxon>
    </lineage>
</organism>
<reference key="1">
    <citation type="journal article" date="2007" name="PLoS Genet.">
        <title>Patterns and implications of gene gain and loss in the evolution of Prochlorococcus.</title>
        <authorList>
            <person name="Kettler G.C."/>
            <person name="Martiny A.C."/>
            <person name="Huang K."/>
            <person name="Zucker J."/>
            <person name="Coleman M.L."/>
            <person name="Rodrigue S."/>
            <person name="Chen F."/>
            <person name="Lapidus A."/>
            <person name="Ferriera S."/>
            <person name="Johnson J."/>
            <person name="Steglich C."/>
            <person name="Church G.M."/>
            <person name="Richardson P."/>
            <person name="Chisholm S.W."/>
        </authorList>
    </citation>
    <scope>NUCLEOTIDE SEQUENCE [LARGE SCALE GENOMIC DNA]</scope>
    <source>
        <strain>MIT 9515</strain>
    </source>
</reference>
<keyword id="KW-0028">Amino-acid biosynthesis</keyword>
<keyword id="KW-0057">Aromatic amino acid biosynthesis</keyword>
<keyword id="KW-0521">NADP</keyword>
<keyword id="KW-0560">Oxidoreductase</keyword>
<name>AROE_PROM5</name>
<comment type="function">
    <text evidence="1">Involved in the biosynthesis of the chorismate, which leads to the biosynthesis of aromatic amino acids. Catalyzes the reversible NADPH linked reduction of 3-dehydroshikimate (DHSA) to yield shikimate (SA).</text>
</comment>
<comment type="catalytic activity">
    <reaction evidence="1">
        <text>shikimate + NADP(+) = 3-dehydroshikimate + NADPH + H(+)</text>
        <dbReference type="Rhea" id="RHEA:17737"/>
        <dbReference type="ChEBI" id="CHEBI:15378"/>
        <dbReference type="ChEBI" id="CHEBI:16630"/>
        <dbReference type="ChEBI" id="CHEBI:36208"/>
        <dbReference type="ChEBI" id="CHEBI:57783"/>
        <dbReference type="ChEBI" id="CHEBI:58349"/>
        <dbReference type="EC" id="1.1.1.25"/>
    </reaction>
</comment>
<comment type="pathway">
    <text evidence="1">Metabolic intermediate biosynthesis; chorismate biosynthesis; chorismate from D-erythrose 4-phosphate and phosphoenolpyruvate: step 4/7.</text>
</comment>
<comment type="subunit">
    <text evidence="1">Homodimer.</text>
</comment>
<comment type="similarity">
    <text evidence="1">Belongs to the shikimate dehydrogenase family.</text>
</comment>
<proteinExistence type="inferred from homology"/>
<protein>
    <recommendedName>
        <fullName evidence="1">Shikimate dehydrogenase (NADP(+))</fullName>
        <shortName evidence="1">SDH</shortName>
        <ecNumber evidence="1">1.1.1.25</ecNumber>
    </recommendedName>
</protein>
<gene>
    <name evidence="1" type="primary">aroE</name>
    <name type="ordered locus">P9515_18961</name>
</gene>